<dbReference type="EMBL" id="AJ010068">
    <property type="protein sequence ID" value="CAA08990.1"/>
    <property type="molecule type" value="mRNA"/>
</dbReference>
<dbReference type="EMBL" id="CU329670">
    <property type="protein sequence ID" value="CAB76272.1"/>
    <property type="molecule type" value="Genomic_DNA"/>
</dbReference>
<dbReference type="PIR" id="T43644">
    <property type="entry name" value="T43644"/>
</dbReference>
<dbReference type="PIR" id="T50100">
    <property type="entry name" value="T50100"/>
</dbReference>
<dbReference type="RefSeq" id="NP_594717.1">
    <property type="nucleotide sequence ID" value="NM_001020144.2"/>
</dbReference>
<dbReference type="SMR" id="Q9P7H0"/>
<dbReference type="BioGRID" id="278833">
    <property type="interactions" value="12"/>
</dbReference>
<dbReference type="FunCoup" id="Q9P7H0">
    <property type="interactions" value="506"/>
</dbReference>
<dbReference type="STRING" id="284812.Q9P7H0"/>
<dbReference type="iPTMnet" id="Q9P7H0"/>
<dbReference type="PaxDb" id="4896-SPAC1782.10c.1"/>
<dbReference type="EnsemblFungi" id="SPAC1782.10c.1">
    <property type="protein sequence ID" value="SPAC1782.10c.1:pep"/>
    <property type="gene ID" value="SPAC1782.10c"/>
</dbReference>
<dbReference type="GeneID" id="2542369"/>
<dbReference type="KEGG" id="spo:2542369"/>
<dbReference type="PomBase" id="SPAC1782.10c">
    <property type="gene designation" value="nhp2"/>
</dbReference>
<dbReference type="VEuPathDB" id="FungiDB:SPAC1782.10c"/>
<dbReference type="eggNOG" id="KOG3167">
    <property type="taxonomic scope" value="Eukaryota"/>
</dbReference>
<dbReference type="HOGENOM" id="CLU_084513_1_1_1"/>
<dbReference type="InParanoid" id="Q9P7H0"/>
<dbReference type="OMA" id="EDNYEAR"/>
<dbReference type="PhylomeDB" id="Q9P7H0"/>
<dbReference type="PRO" id="PR:Q9P7H0"/>
<dbReference type="Proteomes" id="UP000002485">
    <property type="component" value="Chromosome I"/>
</dbReference>
<dbReference type="GO" id="GO:0031429">
    <property type="term" value="C:box H/ACA snoRNP complex"/>
    <property type="evidence" value="ECO:0000316"/>
    <property type="project" value="PomBase"/>
</dbReference>
<dbReference type="GO" id="GO:0005730">
    <property type="term" value="C:nucleolus"/>
    <property type="evidence" value="ECO:0000314"/>
    <property type="project" value="PomBase"/>
</dbReference>
<dbReference type="GO" id="GO:0005634">
    <property type="term" value="C:nucleus"/>
    <property type="evidence" value="ECO:0007005"/>
    <property type="project" value="PomBase"/>
</dbReference>
<dbReference type="GO" id="GO:0005732">
    <property type="term" value="C:sno(s)RNA-containing ribonucleoprotein complex"/>
    <property type="evidence" value="ECO:0000250"/>
    <property type="project" value="UniProtKB"/>
</dbReference>
<dbReference type="GO" id="GO:0034513">
    <property type="term" value="F:box H/ACA snoRNA binding"/>
    <property type="evidence" value="ECO:0000316"/>
    <property type="project" value="PomBase"/>
</dbReference>
<dbReference type="GO" id="GO:0019843">
    <property type="term" value="F:rRNA binding"/>
    <property type="evidence" value="ECO:0000305"/>
    <property type="project" value="PomBase"/>
</dbReference>
<dbReference type="GO" id="GO:0031118">
    <property type="term" value="P:rRNA pseudouridine synthesis"/>
    <property type="evidence" value="ECO:0000316"/>
    <property type="project" value="PomBase"/>
</dbReference>
<dbReference type="GO" id="GO:0031120">
    <property type="term" value="P:snRNA pseudouridine synthesis"/>
    <property type="evidence" value="ECO:0000316"/>
    <property type="project" value="PomBase"/>
</dbReference>
<dbReference type="FunFam" id="3.30.1330.30:FF:000015">
    <property type="entry name" value="H/ACA ribonucleoprotein complex subunit NHP2"/>
    <property type="match status" value="1"/>
</dbReference>
<dbReference type="Gene3D" id="3.30.1330.30">
    <property type="match status" value="1"/>
</dbReference>
<dbReference type="InterPro" id="IPR050257">
    <property type="entry name" value="eL8/uL1-like"/>
</dbReference>
<dbReference type="InterPro" id="IPR002415">
    <property type="entry name" value="H/ACA_rnp_Nhp2-like"/>
</dbReference>
<dbReference type="InterPro" id="IPR029064">
    <property type="entry name" value="Ribosomal_eL30-like_sf"/>
</dbReference>
<dbReference type="InterPro" id="IPR004038">
    <property type="entry name" value="Ribosomal_eL8/eL30/eS12/Gad45"/>
</dbReference>
<dbReference type="InterPro" id="IPR018492">
    <property type="entry name" value="Ribosomal_eL8/Nhp2"/>
</dbReference>
<dbReference type="PANTHER" id="PTHR23105">
    <property type="entry name" value="RIBOSOMAL PROTEIN L7AE FAMILY MEMBER"/>
    <property type="match status" value="1"/>
</dbReference>
<dbReference type="Pfam" id="PF01248">
    <property type="entry name" value="Ribosomal_L7Ae"/>
    <property type="match status" value="1"/>
</dbReference>
<dbReference type="PRINTS" id="PR00881">
    <property type="entry name" value="L7ARS6FAMILY"/>
</dbReference>
<dbReference type="PRINTS" id="PR00883">
    <property type="entry name" value="NUCLEARHMG"/>
</dbReference>
<dbReference type="SUPFAM" id="SSF55315">
    <property type="entry name" value="L30e-like"/>
    <property type="match status" value="1"/>
</dbReference>
<proteinExistence type="evidence at protein level"/>
<gene>
    <name type="primary">nhp2</name>
    <name type="ORF">SPAC1782.10c</name>
</gene>
<keyword id="KW-0539">Nucleus</keyword>
<keyword id="KW-0597">Phosphoprotein</keyword>
<keyword id="KW-1185">Reference proteome</keyword>
<keyword id="KW-0687">Ribonucleoprotein</keyword>
<keyword id="KW-0690">Ribosome biogenesis</keyword>
<keyword id="KW-0694">RNA-binding</keyword>
<keyword id="KW-0698">rRNA processing</keyword>
<reference evidence="4" key="1">
    <citation type="journal article" date="1999" name="Exp. Cell Res.">
        <title>Functional conservation and cell cycle localization of the Nhp2 core component of H+ACA snoRNPs in fission and budding yeasts.</title>
        <authorList>
            <person name="Maiorano D."/>
            <person name="Brimage L.J."/>
            <person name="Leroy D."/>
            <person name="Kearsey S.E."/>
        </authorList>
    </citation>
    <scope>NUCLEOTIDE SEQUENCE [MRNA]</scope>
    <scope>FUNCTION</scope>
    <scope>SUBCELLULAR LOCATION</scope>
</reference>
<reference key="2">
    <citation type="journal article" date="2002" name="Nature">
        <title>The genome sequence of Schizosaccharomyces pombe.</title>
        <authorList>
            <person name="Wood V."/>
            <person name="Gwilliam R."/>
            <person name="Rajandream M.A."/>
            <person name="Lyne M.H."/>
            <person name="Lyne R."/>
            <person name="Stewart A."/>
            <person name="Sgouros J.G."/>
            <person name="Peat N."/>
            <person name="Hayles J."/>
            <person name="Baker S.G."/>
            <person name="Basham D."/>
            <person name="Bowman S."/>
            <person name="Brooks K."/>
            <person name="Brown D."/>
            <person name="Brown S."/>
            <person name="Chillingworth T."/>
            <person name="Churcher C.M."/>
            <person name="Collins M."/>
            <person name="Connor R."/>
            <person name="Cronin A."/>
            <person name="Davis P."/>
            <person name="Feltwell T."/>
            <person name="Fraser A."/>
            <person name="Gentles S."/>
            <person name="Goble A."/>
            <person name="Hamlin N."/>
            <person name="Harris D.E."/>
            <person name="Hidalgo J."/>
            <person name="Hodgson G."/>
            <person name="Holroyd S."/>
            <person name="Hornsby T."/>
            <person name="Howarth S."/>
            <person name="Huckle E.J."/>
            <person name="Hunt S."/>
            <person name="Jagels K."/>
            <person name="James K.D."/>
            <person name="Jones L."/>
            <person name="Jones M."/>
            <person name="Leather S."/>
            <person name="McDonald S."/>
            <person name="McLean J."/>
            <person name="Mooney P."/>
            <person name="Moule S."/>
            <person name="Mungall K.L."/>
            <person name="Murphy L.D."/>
            <person name="Niblett D."/>
            <person name="Odell C."/>
            <person name="Oliver K."/>
            <person name="O'Neil S."/>
            <person name="Pearson D."/>
            <person name="Quail M.A."/>
            <person name="Rabbinowitsch E."/>
            <person name="Rutherford K.M."/>
            <person name="Rutter S."/>
            <person name="Saunders D."/>
            <person name="Seeger K."/>
            <person name="Sharp S."/>
            <person name="Skelton J."/>
            <person name="Simmonds M.N."/>
            <person name="Squares R."/>
            <person name="Squares S."/>
            <person name="Stevens K."/>
            <person name="Taylor K."/>
            <person name="Taylor R.G."/>
            <person name="Tivey A."/>
            <person name="Walsh S.V."/>
            <person name="Warren T."/>
            <person name="Whitehead S."/>
            <person name="Woodward J.R."/>
            <person name="Volckaert G."/>
            <person name="Aert R."/>
            <person name="Robben J."/>
            <person name="Grymonprez B."/>
            <person name="Weltjens I."/>
            <person name="Vanstreels E."/>
            <person name="Rieger M."/>
            <person name="Schaefer M."/>
            <person name="Mueller-Auer S."/>
            <person name="Gabel C."/>
            <person name="Fuchs M."/>
            <person name="Duesterhoeft A."/>
            <person name="Fritzc C."/>
            <person name="Holzer E."/>
            <person name="Moestl D."/>
            <person name="Hilbert H."/>
            <person name="Borzym K."/>
            <person name="Langer I."/>
            <person name="Beck A."/>
            <person name="Lehrach H."/>
            <person name="Reinhardt R."/>
            <person name="Pohl T.M."/>
            <person name="Eger P."/>
            <person name="Zimmermann W."/>
            <person name="Wedler H."/>
            <person name="Wambutt R."/>
            <person name="Purnelle B."/>
            <person name="Goffeau A."/>
            <person name="Cadieu E."/>
            <person name="Dreano S."/>
            <person name="Gloux S."/>
            <person name="Lelaure V."/>
            <person name="Mottier S."/>
            <person name="Galibert F."/>
            <person name="Aves S.J."/>
            <person name="Xiang Z."/>
            <person name="Hunt C."/>
            <person name="Moore K."/>
            <person name="Hurst S.M."/>
            <person name="Lucas M."/>
            <person name="Rochet M."/>
            <person name="Gaillardin C."/>
            <person name="Tallada V.A."/>
            <person name="Garzon A."/>
            <person name="Thode G."/>
            <person name="Daga R.R."/>
            <person name="Cruzado L."/>
            <person name="Jimenez J."/>
            <person name="Sanchez M."/>
            <person name="del Rey F."/>
            <person name="Benito J."/>
            <person name="Dominguez A."/>
            <person name="Revuelta J.L."/>
            <person name="Moreno S."/>
            <person name="Armstrong J."/>
            <person name="Forsburg S.L."/>
            <person name="Cerutti L."/>
            <person name="Lowe T."/>
            <person name="McCombie W.R."/>
            <person name="Paulsen I."/>
            <person name="Potashkin J."/>
            <person name="Shpakovski G.V."/>
            <person name="Ussery D."/>
            <person name="Barrell B.G."/>
            <person name="Nurse P."/>
        </authorList>
    </citation>
    <scope>NUCLEOTIDE SEQUENCE [LARGE SCALE GENOMIC DNA]</scope>
    <source>
        <strain>972 / ATCC 24843</strain>
    </source>
</reference>
<reference key="3">
    <citation type="journal article" date="2008" name="J. Proteome Res.">
        <title>Phosphoproteome analysis of fission yeast.</title>
        <authorList>
            <person name="Wilson-Grady J.T."/>
            <person name="Villen J."/>
            <person name="Gygi S.P."/>
        </authorList>
    </citation>
    <scope>PHOSPHORYLATION [LARGE SCALE ANALYSIS] AT SER-119</scope>
    <scope>IDENTIFICATION BY MASS SPECTROMETRY</scope>
</reference>
<protein>
    <recommendedName>
        <fullName>H/ACA ribonucleoprotein complex subunit nhp2</fullName>
    </recommendedName>
    <alternativeName>
        <fullName>H/ACA snoRNP protein NHP2</fullName>
    </alternativeName>
    <alternativeName>
        <fullName>High mobility group-like nuclear protein 2</fullName>
    </alternativeName>
    <alternativeName>
        <fullName>P17-nhp2</fullName>
    </alternativeName>
</protein>
<evidence type="ECO:0000250" key="1">
    <source>
        <dbReference type="UniProtKB" id="P32495"/>
    </source>
</evidence>
<evidence type="ECO:0000269" key="2">
    <source>
    </source>
</evidence>
<evidence type="ECO:0000269" key="3">
    <source>
    </source>
</evidence>
<evidence type="ECO:0000305" key="4"/>
<organism>
    <name type="scientific">Schizosaccharomyces pombe (strain 972 / ATCC 24843)</name>
    <name type="common">Fission yeast</name>
    <dbReference type="NCBI Taxonomy" id="284812"/>
    <lineage>
        <taxon>Eukaryota</taxon>
        <taxon>Fungi</taxon>
        <taxon>Dikarya</taxon>
        <taxon>Ascomycota</taxon>
        <taxon>Taphrinomycotina</taxon>
        <taxon>Schizosaccharomycetes</taxon>
        <taxon>Schizosaccharomycetales</taxon>
        <taxon>Schizosaccharomycetaceae</taxon>
        <taxon>Schizosaccharomyces</taxon>
    </lineage>
</organism>
<name>NHP2_SCHPO</name>
<comment type="function">
    <text evidence="1 2">Non-catalytic component of the H/ACA small nucleolar ribonucleoprotein (H/ACA snoRNP), which catalyzes pseudouridylation of rRNA and is required for ribosome biogenesis (PubMed:10502409). This involves the isomerization of uridine such that the ribose is subsequently attached to C5, instead of the normal N1 (By similarity). Pseudouridine ('psi') residues may serve to stabilize the conformation of rRNAs (By similarity). The H/ACA snoRNP complex also mediates pseudouridylation of other types of RNAs (By similarity). The H/ACA snoRNP complex mediates pseudouridylation at position 93 in U2 snRNA (By similarity). Directly binds H/ACA snoRNAs (By similarity).</text>
</comment>
<comment type="subunit">
    <text evidence="1">Component of the small nucleolar ribonucleoprotein particles containing H/ACA-type snoRNAs (H/ACA snoRNPs).</text>
</comment>
<comment type="subcellular location">
    <subcellularLocation>
        <location evidence="2">Nucleus</location>
        <location evidence="2">Nucleolus</location>
    </subcellularLocation>
</comment>
<comment type="similarity">
    <text evidence="4">Belongs to the eukaryotic ribosomal protein eL8 family.</text>
</comment>
<feature type="chain" id="PRO_0000136775" description="H/ACA ribonucleoprotein complex subunit nhp2">
    <location>
        <begin position="1"/>
        <end position="154"/>
    </location>
</feature>
<feature type="modified residue" description="Phosphoserine" evidence="3">
    <location>
        <position position="119"/>
    </location>
</feature>
<feature type="sequence conflict" description="In Ref. 1; CAA08990." evidence="4" ref="1">
    <original>A</original>
    <variation>P</variation>
    <location>
        <position position="76"/>
    </location>
</feature>
<sequence length="154" mass="17178">MAKDKKDHKHSGSTEDEYDSYLPALMPIAKPLAPKKLNKKMMKTVKKASKQKHILRGVKEVVKAVRKGEKGLVILAGDISPMDVISHIPVLCEDNNVPYLYTVSKELLGEASNTKRPTSCVMIVPGGKKKDMSKVEEYKESYEEIIKEVPALEV</sequence>
<accession>Q9P7H0</accession>
<accession>O94239</accession>